<evidence type="ECO:0000250" key="1">
    <source>
        <dbReference type="UniProtKB" id="A8K0Z3"/>
    </source>
</evidence>
<evidence type="ECO:0000250" key="2">
    <source>
        <dbReference type="UniProtKB" id="C4AMC7"/>
    </source>
</evidence>
<evidence type="ECO:0000250" key="3">
    <source>
        <dbReference type="UniProtKB" id="Q8VDD8"/>
    </source>
</evidence>
<evidence type="ECO:0000255" key="4">
    <source>
        <dbReference type="PROSITE-ProRule" id="PRU00406"/>
    </source>
</evidence>
<evidence type="ECO:0000256" key="5">
    <source>
        <dbReference type="SAM" id="MobiDB-lite"/>
    </source>
</evidence>
<evidence type="ECO:0000305" key="6"/>
<proteinExistence type="evidence at transcript level"/>
<feature type="chain" id="PRO_0000390968" description="WASH complex subunit 1">
    <location>
        <begin position="1"/>
        <end position="472"/>
    </location>
</feature>
<feature type="domain" description="WH2" evidence="4">
    <location>
        <begin position="364"/>
        <end position="386"/>
    </location>
</feature>
<feature type="region of interest" description="Required for WASH complex assembly" evidence="2">
    <location>
        <begin position="1"/>
        <end position="51"/>
    </location>
</feature>
<feature type="region of interest" description="Disordered" evidence="5">
    <location>
        <begin position="289"/>
        <end position="365"/>
    </location>
</feature>
<feature type="region of interest" description="VCA" evidence="2">
    <location>
        <begin position="352"/>
        <end position="472"/>
    </location>
</feature>
<feature type="region of interest" description="Disordered" evidence="5">
    <location>
        <begin position="377"/>
        <end position="412"/>
    </location>
</feature>
<feature type="region of interest" description="Disordered" evidence="5">
    <location>
        <begin position="426"/>
        <end position="472"/>
    </location>
</feature>
<feature type="compositionally biased region" description="Pro residues" evidence="5">
    <location>
        <begin position="301"/>
        <end position="319"/>
    </location>
</feature>
<feature type="compositionally biased region" description="Pro residues" evidence="5">
    <location>
        <begin position="327"/>
        <end position="336"/>
    </location>
</feature>
<feature type="compositionally biased region" description="Basic and acidic residues" evidence="5">
    <location>
        <begin position="385"/>
        <end position="401"/>
    </location>
</feature>
<name>WASH1_XENTR</name>
<accession>Q28DN4</accession>
<sequence length="472" mass="51236">MPQNRSMESQAYSLPLILPDLRREEAIHQITDTLQHLQTVSNDIFSRILQRVETNRGQLQRINGRLSLAQAKIERLKGIKKAIKVFSSAKYPAPEHLQEYSSVFAGAEDGWLAKKLRHKIQSKHRPLDEQAVQEKLKYFPVCVNTRGQDEESAEEGLGSLPRNISSVSSLLLFNTTENLYKKYVFLDPLAGVVTRTNPALEGEDEEKLFDAPLSITKREQLERQTAENYFYVPDLGQVPEIDVPYSLPDLPGVADDLMYSADLGPGIAPSAPGVPIPELPTFITEDITENSRTDSQDGRLLPPPPPPPPPPPPPPPPEPSVLSPPTSLAPPLPIPAPARVGSSDVGDPGSLQGAPKEVVNPSDGRASLLESIRQAGGIGKAKLRNVKEKKLEKKKMKEQEQVRATGGGGDLMSDLFNKLAMRRKGISGKGPAAGEASGDGPTGAFARISDTIPPLPPPDQASGDGDEEDWES</sequence>
<organism>
    <name type="scientific">Xenopus tropicalis</name>
    <name type="common">Western clawed frog</name>
    <name type="synonym">Silurana tropicalis</name>
    <dbReference type="NCBI Taxonomy" id="8364"/>
    <lineage>
        <taxon>Eukaryota</taxon>
        <taxon>Metazoa</taxon>
        <taxon>Chordata</taxon>
        <taxon>Craniata</taxon>
        <taxon>Vertebrata</taxon>
        <taxon>Euteleostomi</taxon>
        <taxon>Amphibia</taxon>
        <taxon>Batrachia</taxon>
        <taxon>Anura</taxon>
        <taxon>Pipoidea</taxon>
        <taxon>Pipidae</taxon>
        <taxon>Xenopodinae</taxon>
        <taxon>Xenopus</taxon>
        <taxon>Silurana</taxon>
    </lineage>
</organism>
<keyword id="KW-0009">Actin-binding</keyword>
<keyword id="KW-0967">Endosome</keyword>
<keyword id="KW-0472">Membrane</keyword>
<keyword id="KW-0653">Protein transport</keyword>
<keyword id="KW-1185">Reference proteome</keyword>
<keyword id="KW-0813">Transport</keyword>
<gene>
    <name evidence="1" type="primary">washc1</name>
    <name type="synonym">wash1</name>
    <name type="ORF">TNeu121a17.1</name>
</gene>
<dbReference type="EMBL" id="CR855419">
    <property type="protein sequence ID" value="CAJ83032.1"/>
    <property type="molecule type" value="mRNA"/>
</dbReference>
<dbReference type="EMBL" id="BC123023">
    <property type="protein sequence ID" value="AAI23024.1"/>
    <property type="molecule type" value="mRNA"/>
</dbReference>
<dbReference type="RefSeq" id="NP_001016854.1">
    <property type="nucleotide sequence ID" value="NM_001016854.2"/>
</dbReference>
<dbReference type="RefSeq" id="XP_012814500.1">
    <property type="nucleotide sequence ID" value="XM_012959046.2"/>
</dbReference>
<dbReference type="RefSeq" id="XP_012814501.1">
    <property type="nucleotide sequence ID" value="XM_012959047.1"/>
</dbReference>
<dbReference type="RefSeq" id="XP_012814502.1">
    <property type="nucleotide sequence ID" value="XM_012959048.3"/>
</dbReference>
<dbReference type="SMR" id="Q28DN4"/>
<dbReference type="FunCoup" id="Q28DN4">
    <property type="interactions" value="506"/>
</dbReference>
<dbReference type="STRING" id="8364.ENSXETP00000003133"/>
<dbReference type="PaxDb" id="8364-ENSXETP00000040722"/>
<dbReference type="DNASU" id="549608"/>
<dbReference type="GeneID" id="549608"/>
<dbReference type="KEGG" id="xtr:549608"/>
<dbReference type="AGR" id="Xenbase:XB-GENE-5947821"/>
<dbReference type="CTD" id="100287171"/>
<dbReference type="Xenbase" id="XB-GENE-5947821">
    <property type="gene designation" value="washc1"/>
</dbReference>
<dbReference type="eggNOG" id="ENOG502QSX3">
    <property type="taxonomic scope" value="Eukaryota"/>
</dbReference>
<dbReference type="InParanoid" id="Q28DN4"/>
<dbReference type="OMA" id="SMDSPYE"/>
<dbReference type="OrthoDB" id="307871at2759"/>
<dbReference type="Proteomes" id="UP000008143">
    <property type="component" value="Chromosome 3"/>
</dbReference>
<dbReference type="Bgee" id="ENSXETG00000003630">
    <property type="expression patterns" value="Expressed in gastrula and 12 other cell types or tissues"/>
</dbReference>
<dbReference type="GO" id="GO:0005829">
    <property type="term" value="C:cytosol"/>
    <property type="evidence" value="ECO:0007669"/>
    <property type="project" value="GOC"/>
</dbReference>
<dbReference type="GO" id="GO:0005769">
    <property type="term" value="C:early endosome"/>
    <property type="evidence" value="ECO:0000250"/>
    <property type="project" value="UniProtKB"/>
</dbReference>
<dbReference type="GO" id="GO:0031901">
    <property type="term" value="C:early endosome membrane"/>
    <property type="evidence" value="ECO:0007669"/>
    <property type="project" value="UniProtKB-SubCell"/>
</dbReference>
<dbReference type="GO" id="GO:0055037">
    <property type="term" value="C:recycling endosome"/>
    <property type="evidence" value="ECO:0000250"/>
    <property type="project" value="UniProtKB"/>
</dbReference>
<dbReference type="GO" id="GO:0055038">
    <property type="term" value="C:recycling endosome membrane"/>
    <property type="evidence" value="ECO:0007669"/>
    <property type="project" value="UniProtKB-SubCell"/>
</dbReference>
<dbReference type="GO" id="GO:0071203">
    <property type="term" value="C:WASH complex"/>
    <property type="evidence" value="ECO:0000250"/>
    <property type="project" value="UniProtKB"/>
</dbReference>
<dbReference type="GO" id="GO:0003779">
    <property type="term" value="F:actin binding"/>
    <property type="evidence" value="ECO:0007669"/>
    <property type="project" value="UniProtKB-KW"/>
</dbReference>
<dbReference type="GO" id="GO:0043014">
    <property type="term" value="F:alpha-tubulin binding"/>
    <property type="evidence" value="ECO:0000250"/>
    <property type="project" value="UniProtKB"/>
</dbReference>
<dbReference type="GO" id="GO:0034314">
    <property type="term" value="P:Arp2/3 complex-mediated actin nucleation"/>
    <property type="evidence" value="ECO:0000250"/>
    <property type="project" value="UniProtKB"/>
</dbReference>
<dbReference type="GO" id="GO:0016197">
    <property type="term" value="P:endosomal transport"/>
    <property type="evidence" value="ECO:0000250"/>
    <property type="project" value="UniProtKB"/>
</dbReference>
<dbReference type="GO" id="GO:0015031">
    <property type="term" value="P:protein transport"/>
    <property type="evidence" value="ECO:0007669"/>
    <property type="project" value="UniProtKB-KW"/>
</dbReference>
<dbReference type="GO" id="GO:0042147">
    <property type="term" value="P:retrograde transport, endosome to Golgi"/>
    <property type="evidence" value="ECO:0000250"/>
    <property type="project" value="UniProtKB"/>
</dbReference>
<dbReference type="InterPro" id="IPR028290">
    <property type="entry name" value="WASH1"/>
</dbReference>
<dbReference type="InterPro" id="IPR021854">
    <property type="entry name" value="WASH1_WAHD"/>
</dbReference>
<dbReference type="InterPro" id="IPR003124">
    <property type="entry name" value="WH2_dom"/>
</dbReference>
<dbReference type="PANTHER" id="PTHR23331">
    <property type="entry name" value="CXYORF1"/>
    <property type="match status" value="1"/>
</dbReference>
<dbReference type="PANTHER" id="PTHR23331:SF5">
    <property type="entry name" value="WAS PROTEIN FAMILY HOMOLOG 2-RELATED"/>
    <property type="match status" value="1"/>
</dbReference>
<dbReference type="Pfam" id="PF11945">
    <property type="entry name" value="WASH_WAHD"/>
    <property type="match status" value="1"/>
</dbReference>
<dbReference type="PROSITE" id="PS51082">
    <property type="entry name" value="WH2"/>
    <property type="match status" value="1"/>
</dbReference>
<protein>
    <recommendedName>
        <fullName evidence="1">WASH complex subunit 1</fullName>
    </recommendedName>
    <alternativeName>
        <fullName>WAS protein family homolog 1</fullName>
    </alternativeName>
</protein>
<reference key="1">
    <citation type="submission" date="2006-10" db="EMBL/GenBank/DDBJ databases">
        <authorList>
            <consortium name="Sanger Xenopus tropicalis EST/cDNA project"/>
        </authorList>
    </citation>
    <scope>NUCLEOTIDE SEQUENCE [LARGE SCALE MRNA]</scope>
    <source>
        <tissue>Neurula</tissue>
    </source>
</reference>
<reference key="2">
    <citation type="submission" date="2006-09" db="EMBL/GenBank/DDBJ databases">
        <authorList>
            <consortium name="NIH - Xenopus Gene Collection (XGC) project"/>
        </authorList>
    </citation>
    <scope>NUCLEOTIDE SEQUENCE [LARGE SCALE MRNA]</scope>
    <source>
        <strain>N6</strain>
        <tissue>Oviduct</tissue>
    </source>
</reference>
<comment type="function">
    <text evidence="1 2">Acts as a nucleation-promoting factor at the surface of endosomes, where it recruits and activates the Arp2/3 complex to induce actin polymerization, playing a key role in the fission of tubules that serve as transport intermediates during endosome sorting.</text>
</comment>
<comment type="subunit">
    <text evidence="1 2">Component of the WASH complex.</text>
</comment>
<comment type="subcellular location">
    <subcellularLocation>
        <location evidence="1">Early endosome membrane</location>
    </subcellularLocation>
    <subcellularLocation>
        <location evidence="3">Recycling endosome membrane</location>
    </subcellularLocation>
</comment>
<comment type="domain">
    <text evidence="2">The VCA (verprolin, cofilin, acidic) domain promotes actin polymerization by the Arp2/3 complex in vitro.</text>
</comment>
<comment type="similarity">
    <text evidence="6">Belongs to the WASH1 family.</text>
</comment>